<keyword id="KW-0028">Amino-acid biosynthesis</keyword>
<keyword id="KW-0220">Diaminopimelate biosynthesis</keyword>
<keyword id="KW-0378">Hydrolase</keyword>
<keyword id="KW-0457">Lysine biosynthesis</keyword>
<dbReference type="EC" id="3.5.1.47" evidence="1"/>
<dbReference type="EMBL" id="CP000517">
    <property type="protein sequence ID" value="ABX27020.1"/>
    <property type="molecule type" value="Genomic_DNA"/>
</dbReference>
<dbReference type="RefSeq" id="WP_012211731.1">
    <property type="nucleotide sequence ID" value="NC_010080.1"/>
</dbReference>
<dbReference type="SMR" id="A8YUT2"/>
<dbReference type="KEGG" id="lhe:lhv_0907"/>
<dbReference type="eggNOG" id="COG1473">
    <property type="taxonomic scope" value="Bacteria"/>
</dbReference>
<dbReference type="HOGENOM" id="CLU_023257_0_1_9"/>
<dbReference type="UniPathway" id="UPA00034">
    <property type="reaction ID" value="UER00024"/>
</dbReference>
<dbReference type="Proteomes" id="UP000000790">
    <property type="component" value="Chromosome"/>
</dbReference>
<dbReference type="GO" id="GO:0050118">
    <property type="term" value="F:N-acetyldiaminopimelate deacetylase activity"/>
    <property type="evidence" value="ECO:0007669"/>
    <property type="project" value="UniProtKB-UniRule"/>
</dbReference>
<dbReference type="GO" id="GO:0019877">
    <property type="term" value="P:diaminopimelate biosynthetic process"/>
    <property type="evidence" value="ECO:0007669"/>
    <property type="project" value="UniProtKB-UniRule"/>
</dbReference>
<dbReference type="GO" id="GO:0009089">
    <property type="term" value="P:lysine biosynthetic process via diaminopimelate"/>
    <property type="evidence" value="ECO:0007669"/>
    <property type="project" value="UniProtKB-UniRule"/>
</dbReference>
<dbReference type="CDD" id="cd05670">
    <property type="entry name" value="M20_Acy1_YkuR-like"/>
    <property type="match status" value="1"/>
</dbReference>
<dbReference type="FunFam" id="3.30.70.360:FF:000001">
    <property type="entry name" value="N-acetyldiaminopimelate deacetylase"/>
    <property type="match status" value="1"/>
</dbReference>
<dbReference type="Gene3D" id="3.30.70.360">
    <property type="match status" value="1"/>
</dbReference>
<dbReference type="Gene3D" id="3.40.630.10">
    <property type="entry name" value="Zn peptidases"/>
    <property type="match status" value="1"/>
</dbReference>
<dbReference type="HAMAP" id="MF_01692">
    <property type="entry name" value="DapEL"/>
    <property type="match status" value="1"/>
</dbReference>
<dbReference type="InterPro" id="IPR023905">
    <property type="entry name" value="AcetylDAP_deacetylase"/>
</dbReference>
<dbReference type="InterPro" id="IPR017439">
    <property type="entry name" value="Amidohydrolase"/>
</dbReference>
<dbReference type="InterPro" id="IPR036264">
    <property type="entry name" value="Bact_exopeptidase_dim_dom"/>
</dbReference>
<dbReference type="InterPro" id="IPR002933">
    <property type="entry name" value="Peptidase_M20"/>
</dbReference>
<dbReference type="InterPro" id="IPR011650">
    <property type="entry name" value="Peptidase_M20_dimer"/>
</dbReference>
<dbReference type="NCBIfam" id="TIGR01891">
    <property type="entry name" value="amidohydrolases"/>
    <property type="match status" value="1"/>
</dbReference>
<dbReference type="PANTHER" id="PTHR11014:SF98">
    <property type="entry name" value="N-ACETYLDIAMINOPIMELATE DEACETYLASE"/>
    <property type="match status" value="1"/>
</dbReference>
<dbReference type="PANTHER" id="PTHR11014">
    <property type="entry name" value="PEPTIDASE M20 FAMILY MEMBER"/>
    <property type="match status" value="1"/>
</dbReference>
<dbReference type="Pfam" id="PF07687">
    <property type="entry name" value="M20_dimer"/>
    <property type="match status" value="1"/>
</dbReference>
<dbReference type="Pfam" id="PF01546">
    <property type="entry name" value="Peptidase_M20"/>
    <property type="match status" value="1"/>
</dbReference>
<dbReference type="PIRSF" id="PIRSF005962">
    <property type="entry name" value="Pept_M20D_amidohydro"/>
    <property type="match status" value="1"/>
</dbReference>
<dbReference type="SUPFAM" id="SSF55031">
    <property type="entry name" value="Bacterial exopeptidase dimerisation domain"/>
    <property type="match status" value="1"/>
</dbReference>
<dbReference type="SUPFAM" id="SSF53187">
    <property type="entry name" value="Zn-dependent exopeptidases"/>
    <property type="match status" value="1"/>
</dbReference>
<comment type="function">
    <text evidence="1">Catalyzes the conversion of N-acetyl-diaminopimelate to diaminopimelate and acetate.</text>
</comment>
<comment type="catalytic activity">
    <reaction evidence="1">
        <text>N-acetyl-(2S,6S)-2,6-diaminopimelate + H2O = (2S,6S)-2,6-diaminopimelate + acetate</text>
        <dbReference type="Rhea" id="RHEA:20405"/>
        <dbReference type="ChEBI" id="CHEBI:15377"/>
        <dbReference type="ChEBI" id="CHEBI:30089"/>
        <dbReference type="ChEBI" id="CHEBI:57609"/>
        <dbReference type="ChEBI" id="CHEBI:58767"/>
        <dbReference type="EC" id="3.5.1.47"/>
    </reaction>
</comment>
<comment type="pathway">
    <text evidence="1">Amino-acid biosynthesis; L-lysine biosynthesis via DAP pathway; LL-2,6-diaminopimelate from (S)-tetrahydrodipicolinate (acetylase route): step 3/3.</text>
</comment>
<comment type="similarity">
    <text evidence="1">Belongs to the peptidase M20A family. N-acetyldiaminopimelate deacetylase subfamily.</text>
</comment>
<reference key="1">
    <citation type="journal article" date="2008" name="J. Bacteriol.">
        <title>Genome sequence of Lactobacillus helveticus: an organism distinguished by selective gene loss and IS element expansion.</title>
        <authorList>
            <person name="Callanan M."/>
            <person name="Kaleta P."/>
            <person name="O'Callaghan J."/>
            <person name="O'Sullivan O."/>
            <person name="Jordan K."/>
            <person name="McAuliffe O."/>
            <person name="Sangrador-Vegas A."/>
            <person name="Slattery L."/>
            <person name="Fitzgerald G.F."/>
            <person name="Beresford T."/>
            <person name="Ross R.P."/>
        </authorList>
    </citation>
    <scope>NUCLEOTIDE SEQUENCE [LARGE SCALE GENOMIC DNA]</scope>
    <source>
        <strain>DPC 4571</strain>
    </source>
</reference>
<feature type="chain" id="PRO_0000376761" description="N-acetyldiaminopimelate deacetylase">
    <location>
        <begin position="1"/>
        <end position="384"/>
    </location>
</feature>
<feature type="active site" evidence="1">
    <location>
        <position position="75"/>
    </location>
</feature>
<feature type="active site" description="Proton acceptor" evidence="1">
    <location>
        <position position="134"/>
    </location>
</feature>
<evidence type="ECO:0000255" key="1">
    <source>
        <dbReference type="HAMAP-Rule" id="MF_01692"/>
    </source>
</evidence>
<accession>A8YUT2</accession>
<gene>
    <name type="ordered locus">lhv_0907</name>
</gene>
<proteinExistence type="inferred from homology"/>
<name>DAPEL_LACH4</name>
<organism>
    <name type="scientific">Lactobacillus helveticus (strain DPC 4571)</name>
    <dbReference type="NCBI Taxonomy" id="405566"/>
    <lineage>
        <taxon>Bacteria</taxon>
        <taxon>Bacillati</taxon>
        <taxon>Bacillota</taxon>
        <taxon>Bacilli</taxon>
        <taxon>Lactobacillales</taxon>
        <taxon>Lactobacillaceae</taxon>
        <taxon>Lactobacillus</taxon>
    </lineage>
</organism>
<protein>
    <recommendedName>
        <fullName evidence="1">N-acetyldiaminopimelate deacetylase</fullName>
        <ecNumber evidence="1">3.5.1.47</ecNumber>
    </recommendedName>
</protein>
<sequence length="384" mass="42507">MAVLTESELIQIRRHLHEIPELALQEKETHDYLLKIIKGFNSEFLTIKVPEELPTAILVLIKGSNPQRTIGYRTDIDALPVEEKTNLPFSSTHPGIMHACGHDIHMSVALGLLSYFSENQPKDNLLFFFQPAEESESGGKKAYEDGIFEGKFRPDEFYGLHDNPELPAGAIGCREGTLFAGTTEVNIDLIGKGGHAAFPQNANDTVVAAASLIMQIQTVISRSIDPIQSGVITLGKVRAGTIRNVIAGQTRIEGTIRGLTQKMILQIDQRLQDLCEGIARSYNMKVNLELNQGGYWPVENNPELTKNFISYMKNNPEVDFVETKPKMTGEDFGFLLAKFPGTMFWLGVGDPDSQLHSANLNPDEKSIIRGVNAIKGFLINRMGI</sequence>